<gene>
    <name evidence="1" type="primary">recF</name>
    <name type="ordered locus">BT9727_0004</name>
</gene>
<proteinExistence type="inferred from homology"/>
<reference key="1">
    <citation type="journal article" date="2006" name="J. Bacteriol.">
        <title>Pathogenomic sequence analysis of Bacillus cereus and Bacillus thuringiensis isolates closely related to Bacillus anthracis.</title>
        <authorList>
            <person name="Han C.S."/>
            <person name="Xie G."/>
            <person name="Challacombe J.F."/>
            <person name="Altherr M.R."/>
            <person name="Bhotika S.S."/>
            <person name="Bruce D."/>
            <person name="Campbell C.S."/>
            <person name="Campbell M.L."/>
            <person name="Chen J."/>
            <person name="Chertkov O."/>
            <person name="Cleland C."/>
            <person name="Dimitrijevic M."/>
            <person name="Doggett N.A."/>
            <person name="Fawcett J.J."/>
            <person name="Glavina T."/>
            <person name="Goodwin L.A."/>
            <person name="Hill K.K."/>
            <person name="Hitchcock P."/>
            <person name="Jackson P.J."/>
            <person name="Keim P."/>
            <person name="Kewalramani A.R."/>
            <person name="Longmire J."/>
            <person name="Lucas S."/>
            <person name="Malfatti S."/>
            <person name="McMurry K."/>
            <person name="Meincke L.J."/>
            <person name="Misra M."/>
            <person name="Moseman B.L."/>
            <person name="Mundt M."/>
            <person name="Munk A.C."/>
            <person name="Okinaka R.T."/>
            <person name="Parson-Quintana B."/>
            <person name="Reilly L.P."/>
            <person name="Richardson P."/>
            <person name="Robinson D.L."/>
            <person name="Rubin E."/>
            <person name="Saunders E."/>
            <person name="Tapia R."/>
            <person name="Tesmer J.G."/>
            <person name="Thayer N."/>
            <person name="Thompson L.S."/>
            <person name="Tice H."/>
            <person name="Ticknor L.O."/>
            <person name="Wills P.L."/>
            <person name="Brettin T.S."/>
            <person name="Gilna P."/>
        </authorList>
    </citation>
    <scope>NUCLEOTIDE SEQUENCE [LARGE SCALE GENOMIC DNA]</scope>
    <source>
        <strain>97-27</strain>
    </source>
</reference>
<sequence>MFISEIQLKNYRNYEKLELSFEDKVNVIIGENAQGKTNLMEAIYVLAMAKSHRTSNDRELIRWDEDFGQIKGKLQKRNSSLSLELNISKKGKKAKLNQLEQQKLSQYIGVMNVVMFAPEDLNLVKGSPQVRRRFLDMELGQIAPVYLYELSQYQKVLTQRNHLLKKMQGNSKNEETMLDVFTLQLIEHGTKILQKRFEFLHLLQEWAAPIHRGISRGLEELEIVYKPSVDVSESMDLSKIKEVYYESFQSVKQREIFRGTTLIGPHRDDLQFFVNSKNVQVFGSQGQQRTTALSLKLAEIELIYSEVKEYPILLLDDVLSELDDYRQSHLLNTIQGKVQTFVTTTSVDGIEHETLKEAKTIHVTNGTVDCEIDRA</sequence>
<accession>Q6HQ00</accession>
<dbReference type="EMBL" id="AE017355">
    <property type="protein sequence ID" value="AAT59234.1"/>
    <property type="molecule type" value="Genomic_DNA"/>
</dbReference>
<dbReference type="RefSeq" id="WP_000470750.1">
    <property type="nucleotide sequence ID" value="NC_005957.1"/>
</dbReference>
<dbReference type="RefSeq" id="YP_034364.1">
    <property type="nucleotide sequence ID" value="NC_005957.1"/>
</dbReference>
<dbReference type="SMR" id="Q6HQ00"/>
<dbReference type="GeneID" id="93011073"/>
<dbReference type="KEGG" id="btk:BT9727_0004"/>
<dbReference type="PATRIC" id="fig|281309.8.peg.4"/>
<dbReference type="HOGENOM" id="CLU_040267_0_1_9"/>
<dbReference type="Proteomes" id="UP000001301">
    <property type="component" value="Chromosome"/>
</dbReference>
<dbReference type="GO" id="GO:0005737">
    <property type="term" value="C:cytoplasm"/>
    <property type="evidence" value="ECO:0007669"/>
    <property type="project" value="UniProtKB-SubCell"/>
</dbReference>
<dbReference type="GO" id="GO:0005524">
    <property type="term" value="F:ATP binding"/>
    <property type="evidence" value="ECO:0007669"/>
    <property type="project" value="UniProtKB-UniRule"/>
</dbReference>
<dbReference type="GO" id="GO:0003697">
    <property type="term" value="F:single-stranded DNA binding"/>
    <property type="evidence" value="ECO:0007669"/>
    <property type="project" value="UniProtKB-UniRule"/>
</dbReference>
<dbReference type="GO" id="GO:0006260">
    <property type="term" value="P:DNA replication"/>
    <property type="evidence" value="ECO:0007669"/>
    <property type="project" value="UniProtKB-UniRule"/>
</dbReference>
<dbReference type="GO" id="GO:0000731">
    <property type="term" value="P:DNA synthesis involved in DNA repair"/>
    <property type="evidence" value="ECO:0007669"/>
    <property type="project" value="TreeGrafter"/>
</dbReference>
<dbReference type="GO" id="GO:0006302">
    <property type="term" value="P:double-strand break repair"/>
    <property type="evidence" value="ECO:0007669"/>
    <property type="project" value="TreeGrafter"/>
</dbReference>
<dbReference type="GO" id="GO:0009432">
    <property type="term" value="P:SOS response"/>
    <property type="evidence" value="ECO:0007669"/>
    <property type="project" value="UniProtKB-UniRule"/>
</dbReference>
<dbReference type="CDD" id="cd03242">
    <property type="entry name" value="ABC_RecF"/>
    <property type="match status" value="1"/>
</dbReference>
<dbReference type="FunFam" id="1.20.1050.90:FF:000002">
    <property type="entry name" value="DNA replication and repair protein RecF"/>
    <property type="match status" value="1"/>
</dbReference>
<dbReference type="FunFam" id="3.40.50.300:FF:000400">
    <property type="entry name" value="DNA replication and repair protein RecF"/>
    <property type="match status" value="1"/>
</dbReference>
<dbReference type="Gene3D" id="3.40.50.300">
    <property type="entry name" value="P-loop containing nucleotide triphosphate hydrolases"/>
    <property type="match status" value="1"/>
</dbReference>
<dbReference type="Gene3D" id="1.20.1050.90">
    <property type="entry name" value="RecF/RecN/SMC, N-terminal domain"/>
    <property type="match status" value="1"/>
</dbReference>
<dbReference type="HAMAP" id="MF_00365">
    <property type="entry name" value="RecF"/>
    <property type="match status" value="1"/>
</dbReference>
<dbReference type="InterPro" id="IPR001238">
    <property type="entry name" value="DNA-binding_RecF"/>
</dbReference>
<dbReference type="InterPro" id="IPR018078">
    <property type="entry name" value="DNA-binding_RecF_CS"/>
</dbReference>
<dbReference type="InterPro" id="IPR027417">
    <property type="entry name" value="P-loop_NTPase"/>
</dbReference>
<dbReference type="InterPro" id="IPR003395">
    <property type="entry name" value="RecF/RecN/SMC_N"/>
</dbReference>
<dbReference type="InterPro" id="IPR042174">
    <property type="entry name" value="RecF_2"/>
</dbReference>
<dbReference type="NCBIfam" id="TIGR00611">
    <property type="entry name" value="recf"/>
    <property type="match status" value="1"/>
</dbReference>
<dbReference type="PANTHER" id="PTHR32182">
    <property type="entry name" value="DNA REPLICATION AND REPAIR PROTEIN RECF"/>
    <property type="match status" value="1"/>
</dbReference>
<dbReference type="PANTHER" id="PTHR32182:SF0">
    <property type="entry name" value="DNA REPLICATION AND REPAIR PROTEIN RECF"/>
    <property type="match status" value="1"/>
</dbReference>
<dbReference type="Pfam" id="PF02463">
    <property type="entry name" value="SMC_N"/>
    <property type="match status" value="1"/>
</dbReference>
<dbReference type="SUPFAM" id="SSF52540">
    <property type="entry name" value="P-loop containing nucleoside triphosphate hydrolases"/>
    <property type="match status" value="1"/>
</dbReference>
<dbReference type="PROSITE" id="PS00617">
    <property type="entry name" value="RECF_1"/>
    <property type="match status" value="1"/>
</dbReference>
<dbReference type="PROSITE" id="PS00618">
    <property type="entry name" value="RECF_2"/>
    <property type="match status" value="1"/>
</dbReference>
<comment type="function">
    <text evidence="1">The RecF protein is involved in DNA metabolism; it is required for DNA replication and normal SOS inducibility. RecF binds preferentially to single-stranded, linear DNA. It also seems to bind ATP.</text>
</comment>
<comment type="subcellular location">
    <subcellularLocation>
        <location evidence="1">Cytoplasm</location>
    </subcellularLocation>
</comment>
<comment type="similarity">
    <text evidence="1">Belongs to the RecF family.</text>
</comment>
<organism>
    <name type="scientific">Bacillus thuringiensis subsp. konkukian (strain 97-27)</name>
    <dbReference type="NCBI Taxonomy" id="281309"/>
    <lineage>
        <taxon>Bacteria</taxon>
        <taxon>Bacillati</taxon>
        <taxon>Bacillota</taxon>
        <taxon>Bacilli</taxon>
        <taxon>Bacillales</taxon>
        <taxon>Bacillaceae</taxon>
        <taxon>Bacillus</taxon>
        <taxon>Bacillus cereus group</taxon>
    </lineage>
</organism>
<name>RECF_BACHK</name>
<feature type="chain" id="PRO_0000236109" description="DNA replication and repair protein RecF">
    <location>
        <begin position="1"/>
        <end position="375"/>
    </location>
</feature>
<feature type="binding site" evidence="1">
    <location>
        <begin position="30"/>
        <end position="37"/>
    </location>
    <ligand>
        <name>ATP</name>
        <dbReference type="ChEBI" id="CHEBI:30616"/>
    </ligand>
</feature>
<evidence type="ECO:0000255" key="1">
    <source>
        <dbReference type="HAMAP-Rule" id="MF_00365"/>
    </source>
</evidence>
<protein>
    <recommendedName>
        <fullName evidence="1">DNA replication and repair protein RecF</fullName>
    </recommendedName>
</protein>
<keyword id="KW-0067">ATP-binding</keyword>
<keyword id="KW-0963">Cytoplasm</keyword>
<keyword id="KW-0227">DNA damage</keyword>
<keyword id="KW-0234">DNA repair</keyword>
<keyword id="KW-0235">DNA replication</keyword>
<keyword id="KW-0238">DNA-binding</keyword>
<keyword id="KW-0547">Nucleotide-binding</keyword>
<keyword id="KW-0742">SOS response</keyword>